<name>FOLD_LIMRJ</name>
<evidence type="ECO:0000255" key="1">
    <source>
        <dbReference type="HAMAP-Rule" id="MF_01576"/>
    </source>
</evidence>
<protein>
    <recommendedName>
        <fullName evidence="1">Bifunctional protein FolD</fullName>
    </recommendedName>
    <domain>
        <recommendedName>
            <fullName evidence="1">Methylenetetrahydrofolate dehydrogenase</fullName>
            <ecNumber evidence="1">1.5.1.5</ecNumber>
        </recommendedName>
    </domain>
    <domain>
        <recommendedName>
            <fullName evidence="1">Methenyltetrahydrofolate cyclohydrolase</fullName>
            <ecNumber evidence="1">3.5.4.9</ecNumber>
        </recommendedName>
    </domain>
</protein>
<feature type="chain" id="PRO_1000196788" description="Bifunctional protein FolD">
    <location>
        <begin position="1"/>
        <end position="286"/>
    </location>
</feature>
<feature type="binding site" evidence="1">
    <location>
        <begin position="167"/>
        <end position="169"/>
    </location>
    <ligand>
        <name>NADP(+)</name>
        <dbReference type="ChEBI" id="CHEBI:58349"/>
    </ligand>
</feature>
<feature type="binding site" evidence="1">
    <location>
        <position position="233"/>
    </location>
    <ligand>
        <name>NADP(+)</name>
        <dbReference type="ChEBI" id="CHEBI:58349"/>
    </ligand>
</feature>
<gene>
    <name evidence="1" type="primary">folD</name>
    <name type="ordered locus">LAR_1116</name>
</gene>
<sequence length="286" mass="30424">MTTIIDGKALAKKINSQTKELVAQLKEKQNIIPGIAVVIAGDDVASLIYTRNKHNKAIKLGINSVLKKFPADVSQAELLAEIEKLNHDDTIDAILVQQPLPPQLDPEVITNAILPTKDVDGLNPLNLGKLFANQHGNYPVACTPRGIMRMLAEYNIDLQGKNAVIVGRSILVGKPLLALLNNANATVTMAGRSTGDLSALTKTADILIVATGVPNLIKATDVKPGAVVIDVGINRLSNGKLTGDVDFEAVKTKAQAITPVPGGVGPMTIATLMEQTVDLAWWRHHG</sequence>
<dbReference type="EC" id="1.5.1.5" evidence="1"/>
<dbReference type="EC" id="3.5.4.9" evidence="1"/>
<dbReference type="EMBL" id="AP007281">
    <property type="protein sequence ID" value="BAG25632.1"/>
    <property type="molecule type" value="Genomic_DNA"/>
</dbReference>
<dbReference type="RefSeq" id="WP_003668408.1">
    <property type="nucleotide sequence ID" value="NC_010609.1"/>
</dbReference>
<dbReference type="SMR" id="B2G850"/>
<dbReference type="KEGG" id="lrf:LAR_1116"/>
<dbReference type="HOGENOM" id="CLU_034045_2_1_9"/>
<dbReference type="UniPathway" id="UPA00193"/>
<dbReference type="GO" id="GO:0005829">
    <property type="term" value="C:cytosol"/>
    <property type="evidence" value="ECO:0007669"/>
    <property type="project" value="TreeGrafter"/>
</dbReference>
<dbReference type="GO" id="GO:0004477">
    <property type="term" value="F:methenyltetrahydrofolate cyclohydrolase activity"/>
    <property type="evidence" value="ECO:0007669"/>
    <property type="project" value="UniProtKB-UniRule"/>
</dbReference>
<dbReference type="GO" id="GO:0004488">
    <property type="term" value="F:methylenetetrahydrofolate dehydrogenase (NADP+) activity"/>
    <property type="evidence" value="ECO:0007669"/>
    <property type="project" value="UniProtKB-UniRule"/>
</dbReference>
<dbReference type="GO" id="GO:0000105">
    <property type="term" value="P:L-histidine biosynthetic process"/>
    <property type="evidence" value="ECO:0007669"/>
    <property type="project" value="UniProtKB-KW"/>
</dbReference>
<dbReference type="GO" id="GO:0009086">
    <property type="term" value="P:methionine biosynthetic process"/>
    <property type="evidence" value="ECO:0007669"/>
    <property type="project" value="UniProtKB-KW"/>
</dbReference>
<dbReference type="GO" id="GO:0006164">
    <property type="term" value="P:purine nucleotide biosynthetic process"/>
    <property type="evidence" value="ECO:0007669"/>
    <property type="project" value="UniProtKB-KW"/>
</dbReference>
<dbReference type="GO" id="GO:0035999">
    <property type="term" value="P:tetrahydrofolate interconversion"/>
    <property type="evidence" value="ECO:0007669"/>
    <property type="project" value="UniProtKB-UniRule"/>
</dbReference>
<dbReference type="CDD" id="cd01080">
    <property type="entry name" value="NAD_bind_m-THF_DH_Cyclohyd"/>
    <property type="match status" value="1"/>
</dbReference>
<dbReference type="FunFam" id="3.40.50.720:FF:000094">
    <property type="entry name" value="Bifunctional protein FolD"/>
    <property type="match status" value="1"/>
</dbReference>
<dbReference type="FunFam" id="3.40.50.10860:FF:000005">
    <property type="entry name" value="C-1-tetrahydrofolate synthase, cytoplasmic, putative"/>
    <property type="match status" value="1"/>
</dbReference>
<dbReference type="Gene3D" id="3.40.50.10860">
    <property type="entry name" value="Leucine Dehydrogenase, chain A, domain 1"/>
    <property type="match status" value="1"/>
</dbReference>
<dbReference type="Gene3D" id="3.40.50.720">
    <property type="entry name" value="NAD(P)-binding Rossmann-like Domain"/>
    <property type="match status" value="1"/>
</dbReference>
<dbReference type="HAMAP" id="MF_01576">
    <property type="entry name" value="THF_DHG_CYH"/>
    <property type="match status" value="1"/>
</dbReference>
<dbReference type="InterPro" id="IPR046346">
    <property type="entry name" value="Aminoacid_DH-like_N_sf"/>
</dbReference>
<dbReference type="InterPro" id="IPR036291">
    <property type="entry name" value="NAD(P)-bd_dom_sf"/>
</dbReference>
<dbReference type="InterPro" id="IPR000672">
    <property type="entry name" value="THF_DH/CycHdrlase"/>
</dbReference>
<dbReference type="InterPro" id="IPR020630">
    <property type="entry name" value="THF_DH/CycHdrlase_cat_dom"/>
</dbReference>
<dbReference type="InterPro" id="IPR020867">
    <property type="entry name" value="THF_DH/CycHdrlase_CS"/>
</dbReference>
<dbReference type="InterPro" id="IPR020631">
    <property type="entry name" value="THF_DH/CycHdrlase_NAD-bd_dom"/>
</dbReference>
<dbReference type="PANTHER" id="PTHR48099:SF5">
    <property type="entry name" value="C-1-TETRAHYDROFOLATE SYNTHASE, CYTOPLASMIC"/>
    <property type="match status" value="1"/>
</dbReference>
<dbReference type="PANTHER" id="PTHR48099">
    <property type="entry name" value="C-1-TETRAHYDROFOLATE SYNTHASE, CYTOPLASMIC-RELATED"/>
    <property type="match status" value="1"/>
</dbReference>
<dbReference type="Pfam" id="PF00763">
    <property type="entry name" value="THF_DHG_CYH"/>
    <property type="match status" value="1"/>
</dbReference>
<dbReference type="Pfam" id="PF02882">
    <property type="entry name" value="THF_DHG_CYH_C"/>
    <property type="match status" value="1"/>
</dbReference>
<dbReference type="PRINTS" id="PR00085">
    <property type="entry name" value="THFDHDRGNASE"/>
</dbReference>
<dbReference type="SUPFAM" id="SSF53223">
    <property type="entry name" value="Aminoacid dehydrogenase-like, N-terminal domain"/>
    <property type="match status" value="1"/>
</dbReference>
<dbReference type="SUPFAM" id="SSF51735">
    <property type="entry name" value="NAD(P)-binding Rossmann-fold domains"/>
    <property type="match status" value="1"/>
</dbReference>
<dbReference type="PROSITE" id="PS00767">
    <property type="entry name" value="THF_DHG_CYH_2"/>
    <property type="match status" value="1"/>
</dbReference>
<reference key="1">
    <citation type="journal article" date="2008" name="DNA Res.">
        <title>Comparative genome analysis of Lactobacillus reuteri and Lactobacillus fermentum reveal a genomic island for reuterin and cobalamin production.</title>
        <authorList>
            <person name="Morita H."/>
            <person name="Toh H."/>
            <person name="Fukuda S."/>
            <person name="Horikawa H."/>
            <person name="Oshima K."/>
            <person name="Suzuki T."/>
            <person name="Murakami M."/>
            <person name="Hisamatsu S."/>
            <person name="Kato Y."/>
            <person name="Takizawa T."/>
            <person name="Fukuoka H."/>
            <person name="Yoshimura T."/>
            <person name="Itoh K."/>
            <person name="O'Sullivan D.J."/>
            <person name="McKay L.L."/>
            <person name="Ohno H."/>
            <person name="Kikuchi J."/>
            <person name="Masaoka T."/>
            <person name="Hattori M."/>
        </authorList>
    </citation>
    <scope>NUCLEOTIDE SEQUENCE [LARGE SCALE GENOMIC DNA]</scope>
    <source>
        <strain>JCM 1112</strain>
    </source>
</reference>
<proteinExistence type="inferred from homology"/>
<organism>
    <name type="scientific">Limosilactobacillus reuteri subsp. reuteri (strain JCM 1112)</name>
    <name type="common">Lactobacillus reuteri</name>
    <dbReference type="NCBI Taxonomy" id="557433"/>
    <lineage>
        <taxon>Bacteria</taxon>
        <taxon>Bacillati</taxon>
        <taxon>Bacillota</taxon>
        <taxon>Bacilli</taxon>
        <taxon>Lactobacillales</taxon>
        <taxon>Lactobacillaceae</taxon>
        <taxon>Limosilactobacillus</taxon>
    </lineage>
</organism>
<comment type="function">
    <text evidence="1">Catalyzes the oxidation of 5,10-methylenetetrahydrofolate to 5,10-methenyltetrahydrofolate and then the hydrolysis of 5,10-methenyltetrahydrofolate to 10-formyltetrahydrofolate.</text>
</comment>
<comment type="catalytic activity">
    <reaction evidence="1">
        <text>(6R)-5,10-methylene-5,6,7,8-tetrahydrofolate + NADP(+) = (6R)-5,10-methenyltetrahydrofolate + NADPH</text>
        <dbReference type="Rhea" id="RHEA:22812"/>
        <dbReference type="ChEBI" id="CHEBI:15636"/>
        <dbReference type="ChEBI" id="CHEBI:57455"/>
        <dbReference type="ChEBI" id="CHEBI:57783"/>
        <dbReference type="ChEBI" id="CHEBI:58349"/>
        <dbReference type="EC" id="1.5.1.5"/>
    </reaction>
</comment>
<comment type="catalytic activity">
    <reaction evidence="1">
        <text>(6R)-5,10-methenyltetrahydrofolate + H2O = (6R)-10-formyltetrahydrofolate + H(+)</text>
        <dbReference type="Rhea" id="RHEA:23700"/>
        <dbReference type="ChEBI" id="CHEBI:15377"/>
        <dbReference type="ChEBI" id="CHEBI:15378"/>
        <dbReference type="ChEBI" id="CHEBI:57455"/>
        <dbReference type="ChEBI" id="CHEBI:195366"/>
        <dbReference type="EC" id="3.5.4.9"/>
    </reaction>
</comment>
<comment type="pathway">
    <text evidence="1">One-carbon metabolism; tetrahydrofolate interconversion.</text>
</comment>
<comment type="subunit">
    <text evidence="1">Homodimer.</text>
</comment>
<comment type="similarity">
    <text evidence="1">Belongs to the tetrahydrofolate dehydrogenase/cyclohydrolase family.</text>
</comment>
<keyword id="KW-0028">Amino-acid biosynthesis</keyword>
<keyword id="KW-0368">Histidine biosynthesis</keyword>
<keyword id="KW-0378">Hydrolase</keyword>
<keyword id="KW-0486">Methionine biosynthesis</keyword>
<keyword id="KW-0511">Multifunctional enzyme</keyword>
<keyword id="KW-0521">NADP</keyword>
<keyword id="KW-0554">One-carbon metabolism</keyword>
<keyword id="KW-0560">Oxidoreductase</keyword>
<keyword id="KW-0658">Purine biosynthesis</keyword>
<accession>B2G850</accession>